<organism>
    <name type="scientific">Mycobacterium ulcerans (strain Agy99)</name>
    <dbReference type="NCBI Taxonomy" id="362242"/>
    <lineage>
        <taxon>Bacteria</taxon>
        <taxon>Bacillati</taxon>
        <taxon>Actinomycetota</taxon>
        <taxon>Actinomycetes</taxon>
        <taxon>Mycobacteriales</taxon>
        <taxon>Mycobacteriaceae</taxon>
        <taxon>Mycobacterium</taxon>
        <taxon>Mycobacterium ulcerans group</taxon>
    </lineage>
</organism>
<gene>
    <name evidence="1" type="primary">rph</name>
    <name type="ordered locus">MUL_3908</name>
</gene>
<name>RNPH_MYCUA</name>
<sequence length="259" mass="27190">MSKREDGRRDDELRPVVITRGFTENPAGSVLIEFGRTKVMCTASVTEGVSRWRKGSGLGWLTAEYAMLPSATHTRSDRESVKGRVGGRTQEISRLVGRSLRACIDLAALGENTIAVDCDVLQADGGTRTAAITGAYVALADAVNYLAAAGKLSDPRPLSCAIAAVSVGVVDGRVRVDLPYEEDSRAEVDMNVVATDTGTLVEVQGTGEGATFPRSTLDKLLDMALGACDTLFAAQCDALALPYPGVLPEGPPPSKAFGS</sequence>
<keyword id="KW-0548">Nucleotidyltransferase</keyword>
<keyword id="KW-0694">RNA-binding</keyword>
<keyword id="KW-0698">rRNA processing</keyword>
<keyword id="KW-0808">Transferase</keyword>
<keyword id="KW-0819">tRNA processing</keyword>
<keyword id="KW-0820">tRNA-binding</keyword>
<protein>
    <recommendedName>
        <fullName evidence="1">Ribonuclease PH</fullName>
        <shortName evidence="1">RNase PH</shortName>
        <ecNumber evidence="1">2.7.7.56</ecNumber>
    </recommendedName>
    <alternativeName>
        <fullName evidence="1">tRNA nucleotidyltransferase</fullName>
    </alternativeName>
</protein>
<accession>A0PUG0</accession>
<proteinExistence type="inferred from homology"/>
<comment type="function">
    <text evidence="1">Phosphorolytic 3'-5' exoribonuclease that plays an important role in tRNA 3'-end maturation. Removes nucleotide residues following the 3'-CCA terminus of tRNAs; can also add nucleotides to the ends of RNA molecules by using nucleoside diphosphates as substrates, but this may not be physiologically important. Probably plays a role in initiation of 16S rRNA degradation (leading to ribosome degradation) during starvation.</text>
</comment>
<comment type="catalytic activity">
    <reaction evidence="1">
        <text>tRNA(n+1) + phosphate = tRNA(n) + a ribonucleoside 5'-diphosphate</text>
        <dbReference type="Rhea" id="RHEA:10628"/>
        <dbReference type="Rhea" id="RHEA-COMP:17343"/>
        <dbReference type="Rhea" id="RHEA-COMP:17344"/>
        <dbReference type="ChEBI" id="CHEBI:43474"/>
        <dbReference type="ChEBI" id="CHEBI:57930"/>
        <dbReference type="ChEBI" id="CHEBI:173114"/>
        <dbReference type="EC" id="2.7.7.56"/>
    </reaction>
</comment>
<comment type="subunit">
    <text evidence="1">Homohexameric ring arranged as a trimer of dimers.</text>
</comment>
<comment type="similarity">
    <text evidence="1">Belongs to the RNase PH family.</text>
</comment>
<reference key="1">
    <citation type="journal article" date="2007" name="Genome Res.">
        <title>Reductive evolution and niche adaptation inferred from the genome of Mycobacterium ulcerans, the causative agent of Buruli ulcer.</title>
        <authorList>
            <person name="Stinear T.P."/>
            <person name="Seemann T."/>
            <person name="Pidot S."/>
            <person name="Frigui W."/>
            <person name="Reysset G."/>
            <person name="Garnier T."/>
            <person name="Meurice G."/>
            <person name="Simon D."/>
            <person name="Bouchier C."/>
            <person name="Ma L."/>
            <person name="Tichit M."/>
            <person name="Porter J.L."/>
            <person name="Ryan J."/>
            <person name="Johnson P.D.R."/>
            <person name="Davies J.K."/>
            <person name="Jenkin G.A."/>
            <person name="Small P.L.C."/>
            <person name="Jones L.M."/>
            <person name="Tekaia F."/>
            <person name="Laval F."/>
            <person name="Daffe M."/>
            <person name="Parkhill J."/>
            <person name="Cole S.T."/>
        </authorList>
    </citation>
    <scope>NUCLEOTIDE SEQUENCE [LARGE SCALE GENOMIC DNA]</scope>
    <source>
        <strain>Agy99</strain>
    </source>
</reference>
<feature type="chain" id="PRO_1000024835" description="Ribonuclease PH">
    <location>
        <begin position="1"/>
        <end position="259"/>
    </location>
</feature>
<feature type="binding site" evidence="1">
    <location>
        <position position="88"/>
    </location>
    <ligand>
        <name>phosphate</name>
        <dbReference type="ChEBI" id="CHEBI:43474"/>
        <note>substrate</note>
    </ligand>
</feature>
<feature type="binding site" evidence="1">
    <location>
        <begin position="126"/>
        <end position="128"/>
    </location>
    <ligand>
        <name>phosphate</name>
        <dbReference type="ChEBI" id="CHEBI:43474"/>
        <note>substrate</note>
    </ligand>
</feature>
<evidence type="ECO:0000255" key="1">
    <source>
        <dbReference type="HAMAP-Rule" id="MF_00564"/>
    </source>
</evidence>
<dbReference type="EC" id="2.7.7.56" evidence="1"/>
<dbReference type="EMBL" id="CP000325">
    <property type="protein sequence ID" value="ABL05979.1"/>
    <property type="molecule type" value="Genomic_DNA"/>
</dbReference>
<dbReference type="RefSeq" id="WP_011741584.1">
    <property type="nucleotide sequence ID" value="NC_008611.1"/>
</dbReference>
<dbReference type="SMR" id="A0PUG0"/>
<dbReference type="KEGG" id="mul:MUL_3908"/>
<dbReference type="eggNOG" id="COG2123">
    <property type="taxonomic scope" value="Bacteria"/>
</dbReference>
<dbReference type="HOGENOM" id="CLU_050858_0_0_11"/>
<dbReference type="Proteomes" id="UP000000765">
    <property type="component" value="Chromosome"/>
</dbReference>
<dbReference type="GO" id="GO:0000175">
    <property type="term" value="F:3'-5'-RNA exonuclease activity"/>
    <property type="evidence" value="ECO:0007669"/>
    <property type="project" value="UniProtKB-UniRule"/>
</dbReference>
<dbReference type="GO" id="GO:0000049">
    <property type="term" value="F:tRNA binding"/>
    <property type="evidence" value="ECO:0007669"/>
    <property type="project" value="UniProtKB-UniRule"/>
</dbReference>
<dbReference type="GO" id="GO:0009022">
    <property type="term" value="F:tRNA nucleotidyltransferase activity"/>
    <property type="evidence" value="ECO:0007669"/>
    <property type="project" value="UniProtKB-UniRule"/>
</dbReference>
<dbReference type="GO" id="GO:0016075">
    <property type="term" value="P:rRNA catabolic process"/>
    <property type="evidence" value="ECO:0007669"/>
    <property type="project" value="UniProtKB-UniRule"/>
</dbReference>
<dbReference type="GO" id="GO:0006364">
    <property type="term" value="P:rRNA processing"/>
    <property type="evidence" value="ECO:0007669"/>
    <property type="project" value="UniProtKB-KW"/>
</dbReference>
<dbReference type="GO" id="GO:0008033">
    <property type="term" value="P:tRNA processing"/>
    <property type="evidence" value="ECO:0007669"/>
    <property type="project" value="UniProtKB-UniRule"/>
</dbReference>
<dbReference type="CDD" id="cd11362">
    <property type="entry name" value="RNase_PH_bact"/>
    <property type="match status" value="1"/>
</dbReference>
<dbReference type="FunFam" id="3.30.230.70:FF:000003">
    <property type="entry name" value="Ribonuclease PH"/>
    <property type="match status" value="1"/>
</dbReference>
<dbReference type="Gene3D" id="3.30.230.70">
    <property type="entry name" value="GHMP Kinase, N-terminal domain"/>
    <property type="match status" value="1"/>
</dbReference>
<dbReference type="HAMAP" id="MF_00564">
    <property type="entry name" value="RNase_PH"/>
    <property type="match status" value="1"/>
</dbReference>
<dbReference type="InterPro" id="IPR001247">
    <property type="entry name" value="ExoRNase_PH_dom1"/>
</dbReference>
<dbReference type="InterPro" id="IPR015847">
    <property type="entry name" value="ExoRNase_PH_dom2"/>
</dbReference>
<dbReference type="InterPro" id="IPR036345">
    <property type="entry name" value="ExoRNase_PH_dom2_sf"/>
</dbReference>
<dbReference type="InterPro" id="IPR027408">
    <property type="entry name" value="PNPase/RNase_PH_dom_sf"/>
</dbReference>
<dbReference type="InterPro" id="IPR020568">
    <property type="entry name" value="Ribosomal_Su5_D2-typ_SF"/>
</dbReference>
<dbReference type="InterPro" id="IPR050080">
    <property type="entry name" value="RNase_PH"/>
</dbReference>
<dbReference type="InterPro" id="IPR002381">
    <property type="entry name" value="RNase_PH_bac-type"/>
</dbReference>
<dbReference type="InterPro" id="IPR018336">
    <property type="entry name" value="RNase_PH_CS"/>
</dbReference>
<dbReference type="NCBIfam" id="TIGR01966">
    <property type="entry name" value="RNasePH"/>
    <property type="match status" value="1"/>
</dbReference>
<dbReference type="PANTHER" id="PTHR11953">
    <property type="entry name" value="EXOSOME COMPLEX COMPONENT"/>
    <property type="match status" value="1"/>
</dbReference>
<dbReference type="PANTHER" id="PTHR11953:SF0">
    <property type="entry name" value="EXOSOME COMPLEX COMPONENT RRP41"/>
    <property type="match status" value="1"/>
</dbReference>
<dbReference type="Pfam" id="PF01138">
    <property type="entry name" value="RNase_PH"/>
    <property type="match status" value="1"/>
</dbReference>
<dbReference type="Pfam" id="PF03725">
    <property type="entry name" value="RNase_PH_C"/>
    <property type="match status" value="1"/>
</dbReference>
<dbReference type="SUPFAM" id="SSF55666">
    <property type="entry name" value="Ribonuclease PH domain 2-like"/>
    <property type="match status" value="1"/>
</dbReference>
<dbReference type="SUPFAM" id="SSF54211">
    <property type="entry name" value="Ribosomal protein S5 domain 2-like"/>
    <property type="match status" value="1"/>
</dbReference>
<dbReference type="PROSITE" id="PS01277">
    <property type="entry name" value="RIBONUCLEASE_PH"/>
    <property type="match status" value="1"/>
</dbReference>